<name>PRY3_YEAST</name>
<comment type="function">
    <molecule>Isoform Long</molecule>
    <text>The full-length isoform (isoform Long) is a daughter cell-specific cell wall protein required for efficient export of lipids such as acetylated sterols. Acts in detoxification of hydrophobic compounds. Involved in tolerance to organic solvents such as dimethyl sulfoxide (DMSO). Also plays a role as an inhibitor of mating. STE12 is utilized as a repressor of full-length PRY3 transcription, ensuring efficient mating.</text>
</comment>
<comment type="function">
    <molecule>Isoform Short</molecule>
    <text evidence="4">There is no evidence that production of the short PRY3 transcript (isoform Short) is anything more than an adventitious by-product of the mechanism responsible for the repression of the full-length transcript. Moreover, no disadvantage is detectable for cells unable to make the short transcript (PubMed:16940175).</text>
</comment>
<comment type="subcellular location">
    <subcellularLocation>
        <location>Secreted</location>
        <location>Cell wall</location>
    </subcellularLocation>
    <subcellularLocation>
        <location>Membrane</location>
        <topology>Lipid-anchor</topology>
        <topology>GPI-anchor</topology>
    </subcellularLocation>
    <text>Covalently-linked GPI-modified cell wall protein (GPI-CWP). The short isoform lacks the predicted signal peptide and might have an alternate localization.</text>
</comment>
<comment type="alternative products">
    <event type="alternative promoter"/>
    <isoform>
        <id>P47033-1</id>
        <name>Long</name>
        <sequence type="displayed"/>
    </isoform>
    <isoform>
        <id>P47033-2</id>
        <name>Short</name>
        <name>+452 PRY3</name>
        <sequence type="not described"/>
    </isoform>
</comment>
<comment type="induction">
    <text evidence="3 4">Expressed specifically in daughter cells through activation by the transcription factor ACE2. STE12 represses expression of the full-length transcript and induces expression of the short form. STE12-binding to pheromone response elements (PREs) at positions -175 and -161 prevents SPT15 from binding TATA-box 1 and thus it binds TATA-box 2 at position +385 and directs internal transcription initiation at position +452.</text>
</comment>
<comment type="PTM">
    <text>The GPI-anchor is attached to the protein in the endoplasmic reticulum and serves to target the protein to the cell surface. There, the glucosamine-inositol phospholipid moiety is cleaved off and the GPI-modified mannoprotein is covalently attached via its lipidless GPI glycan remnant to the 1,6-beta-glucan of the outer cell wall layer.</text>
</comment>
<comment type="miscellaneous">
    <molecule>Isoform Short</molecule>
    <text evidence="6">Produced by alternative promoter usage.</text>
</comment>
<comment type="similarity">
    <text evidence="6">Belongs to the CRISP family.</text>
</comment>
<proteinExistence type="evidence at protein level"/>
<evidence type="ECO:0000255" key="1"/>
<evidence type="ECO:0000256" key="2">
    <source>
        <dbReference type="SAM" id="MobiDB-lite"/>
    </source>
</evidence>
<evidence type="ECO:0000269" key="3">
    <source>
    </source>
</evidence>
<evidence type="ECO:0000269" key="4">
    <source>
    </source>
</evidence>
<evidence type="ECO:0000269" key="5">
    <source>
    </source>
</evidence>
<evidence type="ECO:0000305" key="6"/>
<organism>
    <name type="scientific">Saccharomyces cerevisiae (strain ATCC 204508 / S288c)</name>
    <name type="common">Baker's yeast</name>
    <dbReference type="NCBI Taxonomy" id="559292"/>
    <lineage>
        <taxon>Eukaryota</taxon>
        <taxon>Fungi</taxon>
        <taxon>Dikarya</taxon>
        <taxon>Ascomycota</taxon>
        <taxon>Saccharomycotina</taxon>
        <taxon>Saccharomycetes</taxon>
        <taxon>Saccharomycetales</taxon>
        <taxon>Saccharomycetaceae</taxon>
        <taxon>Saccharomyces</taxon>
    </lineage>
</organism>
<sequence>MLEFPISVLLGCLVAVKAQTTFPNFESDVLNEHNKFRALHVDTAPLTWSDTLATYAQNYADQYDCSGVLTHSDGPYGENLALGYTDTGAVDAWYGEISKYNYSNPGFSESTGHFTQVVWKSTAEIGCGYKYCGTTWNNYIVCSYNPPGNYLGEFAEEVEPLISTVSSSSSSSSSTSTTSDTVSTISSSIMPAVAQGYTTTVSSAASSSSLKSTTINPAKTATLTASSSTVITSSTESVGSSTVSSASSSSVTTSYATSSSTVVSSDATSSTTTTSSVATSSSTTSSDPTSSTAAASSSDPASSSAAASSSASTENAASSSSAISSSSSMVSAPLSSTLTTSTASSRSVTSNSVNSVKFANTTVFSAQTTSSVSASLSSSVAADDIQGSTSKEATSSVSEHTSIVTSATNAAQYATRLGSSSRSSSGAVSSSAVSQSVLNSVIAVNTDVSVTSVSSTAHTTKDTATTSVTASESITSETAQASSSTEKNISNSAATSSSIYSNSASVSGHGVTYAAEYAITSEQSSALATSVPATNCSSIVKTTTLENSSTTTITAITKSTTTLATTANNSTRAATAVTIDPTLDPTDNSASPTDNAKHTSTYGSSSTGASLDSLRTTTSISVSSNTTQLVSTCTSESDYSDSPSFAISTATTTESNLITNTITASCSTDSNFPTSAASSTDETAFTRTISTSCSTLNGASTQTSELTTSPMKTNTVVPASSFPSTTTTCLENDDTAFSSIYTEVNAATIINPGETSSLASDFATSEKPNEPTSVKSTSNEGTSSTTTTYQQTVATLYAKPSSTSLGARTTTGSNGRSTTSQQDGSAMHQPTSSIYTQLKEGTSTTAKLSAYEGAATPLSIFQCNSLAGTIAAFVVAVLFAF</sequence>
<feature type="signal peptide" evidence="1">
    <location>
        <begin position="1"/>
        <end position="18"/>
    </location>
</feature>
<feature type="chain" id="PRO_0000211549" description="Cell wall protein PRY3">
    <location>
        <begin position="19"/>
        <end position="853"/>
    </location>
</feature>
<feature type="propeptide" id="PRO_0000372447" description="Removed in mature form" evidence="1">
    <location>
        <begin position="854"/>
        <end position="881"/>
    </location>
</feature>
<feature type="domain" description="SCP">
    <location>
        <begin position="30"/>
        <end position="144"/>
    </location>
</feature>
<feature type="region of interest" description="Disordered" evidence="2">
    <location>
        <begin position="262"/>
        <end position="313"/>
    </location>
</feature>
<feature type="region of interest" description="Disordered" evidence="2">
    <location>
        <begin position="381"/>
        <end position="400"/>
    </location>
</feature>
<feature type="region of interest" description="Disordered" evidence="2">
    <location>
        <begin position="453"/>
        <end position="494"/>
    </location>
</feature>
<feature type="region of interest" description="Disordered" evidence="2">
    <location>
        <begin position="579"/>
        <end position="611"/>
    </location>
</feature>
<feature type="region of interest" description="Disordered" evidence="2">
    <location>
        <begin position="758"/>
        <end position="788"/>
    </location>
</feature>
<feature type="region of interest" description="Disordered" evidence="2">
    <location>
        <begin position="800"/>
        <end position="830"/>
    </location>
</feature>
<feature type="compositionally biased region" description="Polar residues" evidence="2">
    <location>
        <begin position="386"/>
        <end position="400"/>
    </location>
</feature>
<feature type="compositionally biased region" description="Polar residues" evidence="2">
    <location>
        <begin position="585"/>
        <end position="594"/>
    </location>
</feature>
<feature type="compositionally biased region" description="Low complexity" evidence="2">
    <location>
        <begin position="599"/>
        <end position="611"/>
    </location>
</feature>
<feature type="compositionally biased region" description="Low complexity" evidence="2">
    <location>
        <begin position="776"/>
        <end position="788"/>
    </location>
</feature>
<feature type="compositionally biased region" description="Low complexity" evidence="2">
    <location>
        <begin position="808"/>
        <end position="820"/>
    </location>
</feature>
<feature type="compositionally biased region" description="Polar residues" evidence="2">
    <location>
        <begin position="821"/>
        <end position="830"/>
    </location>
</feature>
<feature type="lipid moiety-binding region" description="GPI-anchor amidated glycine" evidence="1">
    <location>
        <position position="853"/>
    </location>
</feature>
<feature type="glycosylation site" description="N-linked (GlcNAc...) asparagine" evidence="5">
    <location>
        <position position="101"/>
    </location>
</feature>
<feature type="glycosylation site" description="N-linked (GlcNAc...) asparagine" evidence="1">
    <location>
        <position position="360"/>
    </location>
</feature>
<feature type="glycosylation site" description="N-linked (GlcNAc...) asparagine" evidence="1">
    <location>
        <position position="488"/>
    </location>
</feature>
<feature type="glycosylation site" description="N-linked (GlcNAc...) asparagine" evidence="1">
    <location>
        <position position="535"/>
    </location>
</feature>
<feature type="glycosylation site" description="N-linked (GlcNAc...) asparagine" evidence="1">
    <location>
        <position position="547"/>
    </location>
</feature>
<feature type="glycosylation site" description="N-linked (GlcNAc...) asparagine" evidence="1">
    <location>
        <position position="569"/>
    </location>
</feature>
<feature type="glycosylation site" description="N-linked (GlcNAc...) asparagine" evidence="1">
    <location>
        <position position="625"/>
    </location>
</feature>
<dbReference type="EMBL" id="X83502">
    <property type="protein sequence ID" value="CAA58492.1"/>
    <property type="molecule type" value="Genomic_DNA"/>
</dbReference>
<dbReference type="EMBL" id="X88851">
    <property type="protein sequence ID" value="CAA61314.1"/>
    <property type="molecule type" value="Genomic_DNA"/>
</dbReference>
<dbReference type="EMBL" id="Z49353">
    <property type="protein sequence ID" value="CAA89370.1"/>
    <property type="molecule type" value="Genomic_DNA"/>
</dbReference>
<dbReference type="EMBL" id="BK006943">
    <property type="protein sequence ID" value="DAA08721.1"/>
    <property type="molecule type" value="Genomic_DNA"/>
</dbReference>
<dbReference type="PIR" id="S56032">
    <property type="entry name" value="S56032"/>
</dbReference>
<dbReference type="RefSeq" id="NP_012457.1">
    <molecule id="P47033-1"/>
    <property type="nucleotide sequence ID" value="NM_001181511.1"/>
</dbReference>
<dbReference type="SMR" id="P47033"/>
<dbReference type="BioGRID" id="33678">
    <property type="interactions" value="125"/>
</dbReference>
<dbReference type="DIP" id="DIP-3925N"/>
<dbReference type="FunCoup" id="P47033">
    <property type="interactions" value="77"/>
</dbReference>
<dbReference type="IntAct" id="P47033">
    <property type="interactions" value="2"/>
</dbReference>
<dbReference type="STRING" id="4932.YJL078C"/>
<dbReference type="GlyCosmos" id="P47033">
    <property type="glycosylation" value="7 sites, No reported glycans"/>
</dbReference>
<dbReference type="GlyGen" id="P47033">
    <property type="glycosylation" value="7 sites"/>
</dbReference>
<dbReference type="iPTMnet" id="P47033"/>
<dbReference type="PaxDb" id="4932-YJL078C"/>
<dbReference type="PeptideAtlas" id="P47033"/>
<dbReference type="EnsemblFungi" id="YJL078C_mRNA">
    <molecule id="P47033-1"/>
    <property type="protein sequence ID" value="YJL078C"/>
    <property type="gene ID" value="YJL078C"/>
</dbReference>
<dbReference type="GeneID" id="853367"/>
<dbReference type="KEGG" id="sce:YJL078C"/>
<dbReference type="AGR" id="SGD:S000003614"/>
<dbReference type="SGD" id="S000003614">
    <property type="gene designation" value="PRY3"/>
</dbReference>
<dbReference type="VEuPathDB" id="FungiDB:YJL078C"/>
<dbReference type="eggNOG" id="KOG3017">
    <property type="taxonomic scope" value="Eukaryota"/>
</dbReference>
<dbReference type="GeneTree" id="ENSGT00980000198854"/>
<dbReference type="HOGENOM" id="CLU_015197_0_0_1"/>
<dbReference type="InParanoid" id="P47033"/>
<dbReference type="OMA" id="WYGEISK"/>
<dbReference type="OrthoDB" id="337038at2759"/>
<dbReference type="BioCyc" id="YEAST:G3O-31535-MONOMER"/>
<dbReference type="BioGRID-ORCS" id="853367">
    <property type="hits" value="2 hits in 10 CRISPR screens"/>
</dbReference>
<dbReference type="PRO" id="PR:P47033"/>
<dbReference type="Proteomes" id="UP000002311">
    <property type="component" value="Chromosome X"/>
</dbReference>
<dbReference type="RNAct" id="P47033">
    <property type="molecule type" value="protein"/>
</dbReference>
<dbReference type="GO" id="GO:0071944">
    <property type="term" value="C:cell periphery"/>
    <property type="evidence" value="ECO:0007005"/>
    <property type="project" value="SGD"/>
</dbReference>
<dbReference type="GO" id="GO:0005615">
    <property type="term" value="C:extracellular space"/>
    <property type="evidence" value="ECO:0000318"/>
    <property type="project" value="GO_Central"/>
</dbReference>
<dbReference type="GO" id="GO:0009277">
    <property type="term" value="C:fungal-type cell wall"/>
    <property type="evidence" value="ECO:0000314"/>
    <property type="project" value="SGD"/>
</dbReference>
<dbReference type="GO" id="GO:0098552">
    <property type="term" value="C:side of membrane"/>
    <property type="evidence" value="ECO:0007669"/>
    <property type="project" value="UniProtKB-KW"/>
</dbReference>
<dbReference type="GO" id="GO:0000747">
    <property type="term" value="P:conjugation with cellular fusion"/>
    <property type="evidence" value="ECO:0000315"/>
    <property type="project" value="SGD"/>
</dbReference>
<dbReference type="GO" id="GO:0015908">
    <property type="term" value="P:fatty acid transport"/>
    <property type="evidence" value="ECO:0000316"/>
    <property type="project" value="SGD"/>
</dbReference>
<dbReference type="GO" id="GO:0019953">
    <property type="term" value="P:sexual reproduction"/>
    <property type="evidence" value="ECO:0000318"/>
    <property type="project" value="GO_Central"/>
</dbReference>
<dbReference type="GO" id="GO:0015918">
    <property type="term" value="P:sterol transport"/>
    <property type="evidence" value="ECO:0000315"/>
    <property type="project" value="SGD"/>
</dbReference>
<dbReference type="CDD" id="cd05384">
    <property type="entry name" value="CAP_PRY1-like"/>
    <property type="match status" value="1"/>
</dbReference>
<dbReference type="FunFam" id="3.40.33.10:FF:000012">
    <property type="entry name" value="Secreted protein PRY1"/>
    <property type="match status" value="1"/>
</dbReference>
<dbReference type="Gene3D" id="3.40.33.10">
    <property type="entry name" value="CAP"/>
    <property type="match status" value="1"/>
</dbReference>
<dbReference type="InterPro" id="IPR018244">
    <property type="entry name" value="Allrgn_V5/Tpx1_CS"/>
</dbReference>
<dbReference type="InterPro" id="IPR014044">
    <property type="entry name" value="CAP_dom"/>
</dbReference>
<dbReference type="InterPro" id="IPR035940">
    <property type="entry name" value="CAP_sf"/>
</dbReference>
<dbReference type="InterPro" id="IPR001283">
    <property type="entry name" value="CRISP-related"/>
</dbReference>
<dbReference type="PANTHER" id="PTHR10334">
    <property type="entry name" value="CYSTEINE-RICH SECRETORY PROTEIN-RELATED"/>
    <property type="match status" value="1"/>
</dbReference>
<dbReference type="Pfam" id="PF00188">
    <property type="entry name" value="CAP"/>
    <property type="match status" value="1"/>
</dbReference>
<dbReference type="PRINTS" id="PR00837">
    <property type="entry name" value="V5TPXLIKE"/>
</dbReference>
<dbReference type="SMART" id="SM00198">
    <property type="entry name" value="SCP"/>
    <property type="match status" value="1"/>
</dbReference>
<dbReference type="SUPFAM" id="SSF55797">
    <property type="entry name" value="PR-1-like"/>
    <property type="match status" value="1"/>
</dbReference>
<dbReference type="PROSITE" id="PS01009">
    <property type="entry name" value="CRISP_1"/>
    <property type="match status" value="1"/>
</dbReference>
<dbReference type="PROSITE" id="PS01010">
    <property type="entry name" value="CRISP_2"/>
    <property type="match status" value="1"/>
</dbReference>
<gene>
    <name type="primary">PRY3</name>
    <name type="ordered locus">YJL078C</name>
    <name type="ORF">J1027</name>
</gene>
<accession>P47033</accession>
<accession>D6VWA5</accession>
<reference key="1">
    <citation type="journal article" date="1995" name="Yeast">
        <title>Sequence analysis of a 33.1 kb fragment from the left arm of Saccharomyces cerevisiae chromosome X, including putative proteins with leucine zippers, a fungal Zn(II)2-Cys6 binuclear cluster domain and a putative alpha 2-SCB-alpha 2 binding site.</title>
        <authorList>
            <person name="Miosga T."/>
            <person name="Schaaff-Gerstenschlaeger I."/>
            <person name="Chalwatzis N."/>
            <person name="Baur A."/>
            <person name="Boles E."/>
            <person name="Fournier C."/>
            <person name="Schmitt S."/>
            <person name="Velten C."/>
            <person name="Wilhelm N."/>
            <person name="Zimmermann F.K."/>
        </authorList>
    </citation>
    <scope>NUCLEOTIDE SEQUENCE [GENOMIC DNA]</scope>
    <source>
        <strain>ATCC 204508 / S288c</strain>
    </source>
</reference>
<reference key="2">
    <citation type="journal article" date="1996" name="EMBO J.">
        <title>Complete nucleotide sequence of Saccharomyces cerevisiae chromosome X.</title>
        <authorList>
            <person name="Galibert F."/>
            <person name="Alexandraki D."/>
            <person name="Baur A."/>
            <person name="Boles E."/>
            <person name="Chalwatzis N."/>
            <person name="Chuat J.-C."/>
            <person name="Coster F."/>
            <person name="Cziepluch C."/>
            <person name="de Haan M."/>
            <person name="Domdey H."/>
            <person name="Durand P."/>
            <person name="Entian K.-D."/>
            <person name="Gatius M."/>
            <person name="Goffeau A."/>
            <person name="Grivell L.A."/>
            <person name="Hennemann A."/>
            <person name="Herbert C.J."/>
            <person name="Heumann K."/>
            <person name="Hilger F."/>
            <person name="Hollenberg C.P."/>
            <person name="Huang M.-E."/>
            <person name="Jacq C."/>
            <person name="Jauniaux J.-C."/>
            <person name="Katsoulou C."/>
            <person name="Kirchrath L."/>
            <person name="Kleine K."/>
            <person name="Kordes E."/>
            <person name="Koetter P."/>
            <person name="Liebl S."/>
            <person name="Louis E.J."/>
            <person name="Manus V."/>
            <person name="Mewes H.-W."/>
            <person name="Miosga T."/>
            <person name="Obermaier B."/>
            <person name="Perea J."/>
            <person name="Pohl T.M."/>
            <person name="Portetelle D."/>
            <person name="Pujol A."/>
            <person name="Purnelle B."/>
            <person name="Ramezani Rad M."/>
            <person name="Rasmussen S.W."/>
            <person name="Rose M."/>
            <person name="Rossau R."/>
            <person name="Schaaff-Gerstenschlaeger I."/>
            <person name="Smits P.H.M."/>
            <person name="Scarcez T."/>
            <person name="Soriano N."/>
            <person name="To Van D."/>
            <person name="Tzermia M."/>
            <person name="Van Broekhoven A."/>
            <person name="Vandenbol M."/>
            <person name="Wedler H."/>
            <person name="von Wettstein D."/>
            <person name="Wambutt R."/>
            <person name="Zagulski M."/>
            <person name="Zollner A."/>
            <person name="Karpfinger-Hartl L."/>
        </authorList>
    </citation>
    <scope>NUCLEOTIDE SEQUENCE [LARGE SCALE GENOMIC DNA]</scope>
    <source>
        <strain>ATCC 204508 / S288c</strain>
    </source>
</reference>
<reference key="3">
    <citation type="journal article" date="2014" name="G3 (Bethesda)">
        <title>The reference genome sequence of Saccharomyces cerevisiae: Then and now.</title>
        <authorList>
            <person name="Engel S.R."/>
            <person name="Dietrich F.S."/>
            <person name="Fisk D.G."/>
            <person name="Binkley G."/>
            <person name="Balakrishnan R."/>
            <person name="Costanzo M.C."/>
            <person name="Dwight S.S."/>
            <person name="Hitz B.C."/>
            <person name="Karra K."/>
            <person name="Nash R.S."/>
            <person name="Weng S."/>
            <person name="Wong E.D."/>
            <person name="Lloyd P."/>
            <person name="Skrzypek M.S."/>
            <person name="Miyasato S.R."/>
            <person name="Simison M."/>
            <person name="Cherry J.M."/>
        </authorList>
    </citation>
    <scope>GENOME REANNOTATION</scope>
    <source>
        <strain>ATCC 204508 / S288c</strain>
    </source>
</reference>
<reference key="4">
    <citation type="journal article" date="1998" name="Mol. Gen. Genet.">
        <title>Screening for glycosylphosphatidylinositol (GPI)-dependent cell wall proteins in Saccharomyces cerevisiae.</title>
        <authorList>
            <person name="Hamada K."/>
            <person name="Fukuchi S."/>
            <person name="Arisawa M."/>
            <person name="Baba M."/>
            <person name="Kitada K."/>
        </authorList>
    </citation>
    <scope>SUBCELLULAR LOCATION</scope>
</reference>
<reference key="5">
    <citation type="journal article" date="2001" name="Cell">
        <title>Yeast Cbk1 and Mob2 activate daughter-specific genetic programs to induce asymmetric cell fates.</title>
        <authorList>
            <person name="Colman-Lerner A."/>
            <person name="Chin T.E."/>
            <person name="Brent R."/>
        </authorList>
    </citation>
    <scope>INDUCTION</scope>
</reference>
<reference key="6">
    <citation type="journal article" date="2005" name="Genome Biol.">
        <title>The undertranslated transcriptome reveals widespread translational silencing by alternative 5' transcript leaders.</title>
        <authorList>
            <person name="Law G.L."/>
            <person name="Bickel K.S."/>
            <person name="MacKay V.L."/>
            <person name="Morris D.R."/>
        </authorList>
    </citation>
    <scope>ALTERNATIVE PROMOTER USAGE</scope>
</reference>
<reference key="7">
    <citation type="journal article" date="2005" name="J. Biol. Chem.">
        <title>Comprehensive proteomic analysis of Saccharomyces cerevisiae cell walls: identification of proteins covalently attached via glycosylphosphatidylinositol remnants or mild alkali-sensitive linkages.</title>
        <authorList>
            <person name="Yin Q.Y."/>
            <person name="de Groot P.W.J."/>
            <person name="Dekker H.L."/>
            <person name="de Jong L."/>
            <person name="Klis F.M."/>
            <person name="de Koster C.G."/>
        </authorList>
    </citation>
    <scope>SUBCELLULAR LOCATION</scope>
    <scope>IDENTIFICATION BY MASS SPECTROMETRY</scope>
    <scope>GPI-ANCHOR</scope>
</reference>
<reference key="8">
    <citation type="journal article" date="2006" name="Mol. Cell. Biol.">
        <title>Role of the transcription activator Ste12p as a repressor of PRY3 expression.</title>
        <authorList>
            <person name="Bickel K.S."/>
            <person name="Morris D.R."/>
        </authorList>
    </citation>
    <scope>ALTERNATIVE PROMOTER USAGE</scope>
    <scope>FUNCTION</scope>
    <scope>INDUCTION</scope>
</reference>
<reference key="9">
    <citation type="journal article" date="2012" name="J. Proteome Res.">
        <title>Analysis of congenital disorder of glycosylation-Id in a yeast model system shows diverse site-specific under-glycosylation of glycoproteins.</title>
        <authorList>
            <person name="Bailey U.M."/>
            <person name="Jamaluddin M.F."/>
            <person name="Schulz B.L."/>
        </authorList>
    </citation>
    <scope>IDENTIFICATION BY MASS SPECTROMETRY</scope>
    <scope>GLYCOSYLATION AT ASN-101</scope>
</reference>
<reference key="10">
    <citation type="journal article" date="2012" name="Proc. Natl. Acad. Sci. U.S.A.">
        <title>Pathogen-Related Yeast (PRY) proteins and members of the CAP superfamily are secreted sterol-binding proteins.</title>
        <authorList>
            <person name="Choudhary V."/>
            <person name="Schneiter R."/>
        </authorList>
    </citation>
    <scope>FUNCTION</scope>
    <scope>SUBCELLULAR LOCATION</scope>
</reference>
<reference key="11">
    <citation type="journal article" date="2013" name="J. Biotechnol.">
        <title>ABC transporters and cell wall proteins involved in organic solvent tolerance in Saccharomyces cerevisiae.</title>
        <authorList>
            <person name="Nishida N."/>
            <person name="Ozato N."/>
            <person name="Matsui K."/>
            <person name="Kuroda K."/>
            <person name="Ueda M."/>
        </authorList>
    </citation>
    <scope>FUNCTION</scope>
</reference>
<keyword id="KW-0877">Alternative promoter usage</keyword>
<keyword id="KW-0134">Cell wall</keyword>
<keyword id="KW-0325">Glycoprotein</keyword>
<keyword id="KW-0336">GPI-anchor</keyword>
<keyword id="KW-0445">Lipid transport</keyword>
<keyword id="KW-0449">Lipoprotein</keyword>
<keyword id="KW-0472">Membrane</keyword>
<keyword id="KW-1185">Reference proteome</keyword>
<keyword id="KW-0964">Secreted</keyword>
<keyword id="KW-0732">Signal</keyword>
<keyword id="KW-0813">Transport</keyword>
<protein>
    <recommendedName>
        <fullName>Cell wall protein PRY3</fullName>
    </recommendedName>
    <alternativeName>
        <fullName>Pathogenesis-related protein 3</fullName>
    </alternativeName>
</protein>